<comment type="function">
    <text evidence="1">The beta subunit is responsible for the synthesis of L-tryptophan from indole and L-serine.</text>
</comment>
<comment type="catalytic activity">
    <reaction>
        <text>(1S,2R)-1-C-(indol-3-yl)glycerol 3-phosphate + L-serine = D-glyceraldehyde 3-phosphate + L-tryptophan + H2O</text>
        <dbReference type="Rhea" id="RHEA:10532"/>
        <dbReference type="ChEBI" id="CHEBI:15377"/>
        <dbReference type="ChEBI" id="CHEBI:33384"/>
        <dbReference type="ChEBI" id="CHEBI:57912"/>
        <dbReference type="ChEBI" id="CHEBI:58866"/>
        <dbReference type="ChEBI" id="CHEBI:59776"/>
        <dbReference type="EC" id="4.2.1.20"/>
    </reaction>
</comment>
<comment type="cofactor">
    <cofactor evidence="1">
        <name>pyridoxal 5'-phosphate</name>
        <dbReference type="ChEBI" id="CHEBI:597326"/>
    </cofactor>
</comment>
<comment type="pathway">
    <text>Amino-acid biosynthesis; L-tryptophan biosynthesis; L-tryptophan from chorismate: step 5/5.</text>
</comment>
<comment type="subunit">
    <text evidence="1">Tetramer of two alpha and two beta chains.</text>
</comment>
<comment type="similarity">
    <text evidence="2">Belongs to the TrpB family.</text>
</comment>
<feature type="chain" id="PRO_0000099056" description="Tryptophan synthase beta chain 2">
    <location>
        <begin position="1"/>
        <end position="429"/>
    </location>
</feature>
<feature type="modified residue" description="N6-(pyridoxal phosphate)lysine" evidence="1">
    <location>
        <position position="111"/>
    </location>
</feature>
<feature type="helix" evidence="3">
    <location>
        <begin position="11"/>
        <end position="13"/>
    </location>
</feature>
<feature type="strand" evidence="3">
    <location>
        <begin position="17"/>
        <end position="19"/>
    </location>
</feature>
<feature type="helix" evidence="3">
    <location>
        <begin position="22"/>
        <end position="24"/>
    </location>
</feature>
<feature type="strand" evidence="3">
    <location>
        <begin position="25"/>
        <end position="27"/>
    </location>
</feature>
<feature type="turn" evidence="3">
    <location>
        <begin position="37"/>
        <end position="40"/>
    </location>
</feature>
<feature type="turn" evidence="3">
    <location>
        <begin position="43"/>
        <end position="45"/>
    </location>
</feature>
<feature type="helix" evidence="3">
    <location>
        <begin position="49"/>
        <end position="55"/>
    </location>
</feature>
<feature type="strand" evidence="3">
    <location>
        <begin position="59"/>
        <end position="63"/>
    </location>
</feature>
<feature type="helix" evidence="3">
    <location>
        <begin position="66"/>
        <end position="74"/>
    </location>
</feature>
<feature type="strand" evidence="3">
    <location>
        <begin position="81"/>
        <end position="83"/>
    </location>
</feature>
<feature type="helix" evidence="3">
    <location>
        <begin position="85"/>
        <end position="90"/>
    </location>
</feature>
<feature type="strand" evidence="3">
    <location>
        <begin position="93"/>
        <end position="101"/>
    </location>
</feature>
<feature type="helix" evidence="3">
    <location>
        <begin position="102"/>
        <end position="104"/>
    </location>
</feature>
<feature type="helix" evidence="3">
    <location>
        <begin position="112"/>
        <end position="124"/>
    </location>
</feature>
<feature type="strand" evidence="3">
    <location>
        <begin position="130"/>
        <end position="137"/>
    </location>
</feature>
<feature type="helix" evidence="3">
    <location>
        <begin position="138"/>
        <end position="149"/>
    </location>
</feature>
<feature type="strand" evidence="3">
    <location>
        <begin position="154"/>
        <end position="159"/>
    </location>
</feature>
<feature type="helix" evidence="3">
    <location>
        <begin position="160"/>
        <end position="165"/>
    </location>
</feature>
<feature type="helix" evidence="3">
    <location>
        <begin position="167"/>
        <end position="175"/>
    </location>
</feature>
<feature type="strand" evidence="3">
    <location>
        <begin position="179"/>
        <end position="184"/>
    </location>
</feature>
<feature type="helix" evidence="3">
    <location>
        <begin position="189"/>
        <end position="195"/>
    </location>
</feature>
<feature type="helix" evidence="3">
    <location>
        <begin position="205"/>
        <end position="218"/>
    </location>
</feature>
<feature type="helix" evidence="3">
    <location>
        <begin position="230"/>
        <end position="236"/>
    </location>
</feature>
<feature type="helix" evidence="3">
    <location>
        <begin position="238"/>
        <end position="249"/>
    </location>
</feature>
<feature type="strand" evidence="3">
    <location>
        <begin position="255"/>
        <end position="260"/>
    </location>
</feature>
<feature type="strand" evidence="3">
    <location>
        <begin position="262"/>
        <end position="264"/>
    </location>
</feature>
<feature type="helix" evidence="3">
    <location>
        <begin position="265"/>
        <end position="281"/>
    </location>
</feature>
<feature type="strand" evidence="3">
    <location>
        <begin position="286"/>
        <end position="293"/>
    </location>
</feature>
<feature type="helix" evidence="3">
    <location>
        <begin position="298"/>
        <end position="301"/>
    </location>
</feature>
<feature type="strand" evidence="3">
    <location>
        <begin position="303"/>
        <end position="307"/>
    </location>
</feature>
<feature type="strand" evidence="3">
    <location>
        <begin position="318"/>
        <end position="323"/>
    </location>
</feature>
<feature type="helix" evidence="3">
    <location>
        <begin position="344"/>
        <end position="351"/>
    </location>
</feature>
<feature type="strand" evidence="3">
    <location>
        <begin position="354"/>
        <end position="360"/>
    </location>
</feature>
<feature type="helix" evidence="3">
    <location>
        <begin position="362"/>
        <end position="375"/>
    </location>
</feature>
<feature type="helix" evidence="3">
    <location>
        <begin position="382"/>
        <end position="385"/>
    </location>
</feature>
<feature type="helix" evidence="3">
    <location>
        <begin position="388"/>
        <end position="399"/>
    </location>
</feature>
<feature type="strand" evidence="3">
    <location>
        <begin position="405"/>
        <end position="411"/>
    </location>
</feature>
<feature type="helix" evidence="3">
    <location>
        <begin position="416"/>
        <end position="418"/>
    </location>
</feature>
<feature type="helix" evidence="3">
    <location>
        <begin position="419"/>
        <end position="426"/>
    </location>
</feature>
<organism>
    <name type="scientific">Saccharolobus solfataricus (strain ATCC 35092 / DSM 1617 / JCM 11322 / P2)</name>
    <name type="common">Sulfolobus solfataricus</name>
    <dbReference type="NCBI Taxonomy" id="273057"/>
    <lineage>
        <taxon>Archaea</taxon>
        <taxon>Thermoproteota</taxon>
        <taxon>Thermoprotei</taxon>
        <taxon>Sulfolobales</taxon>
        <taxon>Sulfolobaceae</taxon>
        <taxon>Saccharolobus</taxon>
    </lineage>
</organism>
<keyword id="KW-0002">3D-structure</keyword>
<keyword id="KW-0028">Amino-acid biosynthesis</keyword>
<keyword id="KW-0057">Aromatic amino acid biosynthesis</keyword>
<keyword id="KW-0456">Lyase</keyword>
<keyword id="KW-0663">Pyridoxal phosphate</keyword>
<keyword id="KW-1185">Reference proteome</keyword>
<keyword id="KW-0822">Tryptophan biosynthesis</keyword>
<evidence type="ECO:0000250" key="1"/>
<evidence type="ECO:0000305" key="2"/>
<evidence type="ECO:0007829" key="3">
    <source>
        <dbReference type="PDB" id="4QYS"/>
    </source>
</evidence>
<sequence>MAMRIRIDLPQDEIPAQWYNILPDLPEELPPPQDPTGKSLELLKEVLPSKVLELEFAKERYVKIPDEVLERYLQVGRPTPIIRAKRLEEYLGNNIKIYLKMESYTYTGSHKINSALAHVYYAKLDNAKFVTTETGAGQWGSSVALASALFRMKAHIFMVRTSYYAKPYRKYMMQMYGAEVHPSPSDLTEFGRQLLAKDSNHPGSLGIAISDAVEYAHKNGGKYVVGSVVNSDIMFKTIAGMEAKKQMELIGEDPDYIIGVVGGGSNYAALAYPFLGDELRSGKVRRKYIASGSSEVPKMTKGVYKYDYPDTAKLLPMLKMYTIGSDFVPPPVYAGGLRYHGVAPTLSLLISKGIVQARDYSQEESFKWAKLFSELEGYIPAPETSHALPILAEIAEEAKKSGERKTVLVSFSGHGLLDLGNYASVLFKE</sequence>
<accession>Q97TX6</accession>
<dbReference type="EC" id="4.2.1.20"/>
<dbReference type="EMBL" id="AE006641">
    <property type="protein sequence ID" value="AAK41396.1"/>
    <property type="molecule type" value="Genomic_DNA"/>
</dbReference>
<dbReference type="PIR" id="E90267">
    <property type="entry name" value="E90267"/>
</dbReference>
<dbReference type="RefSeq" id="WP_010923209.1">
    <property type="nucleotide sequence ID" value="NC_002754.1"/>
</dbReference>
<dbReference type="PDB" id="4QYS">
    <property type="method" value="X-ray"/>
    <property type="resolution" value="1.94 A"/>
    <property type="chains" value="A/B=1-429"/>
</dbReference>
<dbReference type="PDB" id="6HTE">
    <property type="method" value="X-ray"/>
    <property type="resolution" value="1.96 A"/>
    <property type="chains" value="B/D=4-428"/>
</dbReference>
<dbReference type="PDBsum" id="4QYS"/>
<dbReference type="PDBsum" id="6HTE"/>
<dbReference type="SMR" id="Q97TX6"/>
<dbReference type="FunCoup" id="Q97TX6">
    <property type="interactions" value="206"/>
</dbReference>
<dbReference type="STRING" id="273057.SSO1145"/>
<dbReference type="PaxDb" id="273057-SSO1145"/>
<dbReference type="EnsemblBacteria" id="AAK41396">
    <property type="protein sequence ID" value="AAK41396"/>
    <property type="gene ID" value="SSO1145"/>
</dbReference>
<dbReference type="GeneID" id="1454175"/>
<dbReference type="KEGG" id="sso:SSO1145"/>
<dbReference type="PATRIC" id="fig|273057.12.peg.1136"/>
<dbReference type="eggNOG" id="arCOG01432">
    <property type="taxonomic scope" value="Archaea"/>
</dbReference>
<dbReference type="HOGENOM" id="CLU_042858_1_0_2"/>
<dbReference type="InParanoid" id="Q97TX6"/>
<dbReference type="PhylomeDB" id="Q97TX6"/>
<dbReference type="BRENDA" id="4.2.1.20">
    <property type="organism ID" value="6163"/>
</dbReference>
<dbReference type="STRENDA-DB" id="LQZ1C3">
    <property type="experiment" value="steady-state kinetics with TrpB2o from Thermotoga maritima"/>
</dbReference>
<dbReference type="UniPathway" id="UPA00035">
    <property type="reaction ID" value="UER00044"/>
</dbReference>
<dbReference type="EvolutionaryTrace" id="Q97TX6"/>
<dbReference type="Proteomes" id="UP000001974">
    <property type="component" value="Chromosome"/>
</dbReference>
<dbReference type="GO" id="GO:0052684">
    <property type="term" value="F:L-serine hydro-lyase (adding indole, L-tryptophan-forming) activity"/>
    <property type="evidence" value="ECO:0000318"/>
    <property type="project" value="GO_Central"/>
</dbReference>
<dbReference type="GO" id="GO:0030170">
    <property type="term" value="F:pyridoxal phosphate binding"/>
    <property type="evidence" value="ECO:0007669"/>
    <property type="project" value="InterPro"/>
</dbReference>
<dbReference type="GO" id="GO:0004834">
    <property type="term" value="F:tryptophan synthase activity"/>
    <property type="evidence" value="ECO:0007669"/>
    <property type="project" value="UniProtKB-UniRule"/>
</dbReference>
<dbReference type="GO" id="GO:0000162">
    <property type="term" value="P:L-tryptophan biosynthetic process"/>
    <property type="evidence" value="ECO:0000318"/>
    <property type="project" value="GO_Central"/>
</dbReference>
<dbReference type="CDD" id="cd06446">
    <property type="entry name" value="Trp-synth_B"/>
    <property type="match status" value="1"/>
</dbReference>
<dbReference type="Gene3D" id="3.40.50.1100">
    <property type="match status" value="2"/>
</dbReference>
<dbReference type="HAMAP" id="MF_00133">
    <property type="entry name" value="Trp_synth_beta"/>
    <property type="match status" value="1"/>
</dbReference>
<dbReference type="InterPro" id="IPR006316">
    <property type="entry name" value="Trp_synth_b-like"/>
</dbReference>
<dbReference type="InterPro" id="IPR006653">
    <property type="entry name" value="Trp_synth_b_CS"/>
</dbReference>
<dbReference type="InterPro" id="IPR006654">
    <property type="entry name" value="Trp_synth_beta"/>
</dbReference>
<dbReference type="InterPro" id="IPR023026">
    <property type="entry name" value="Trp_synth_beta/beta-like"/>
</dbReference>
<dbReference type="InterPro" id="IPR001926">
    <property type="entry name" value="TrpB-like_PALP"/>
</dbReference>
<dbReference type="InterPro" id="IPR036052">
    <property type="entry name" value="TrpB-like_PALP_sf"/>
</dbReference>
<dbReference type="NCBIfam" id="NF009057">
    <property type="entry name" value="PRK12391.1"/>
    <property type="match status" value="1"/>
</dbReference>
<dbReference type="NCBIfam" id="TIGR01415">
    <property type="entry name" value="trpB_rel"/>
    <property type="match status" value="1"/>
</dbReference>
<dbReference type="PANTHER" id="PTHR48077:SF6">
    <property type="entry name" value="TRYPTOPHAN SYNTHASE"/>
    <property type="match status" value="1"/>
</dbReference>
<dbReference type="PANTHER" id="PTHR48077">
    <property type="entry name" value="TRYPTOPHAN SYNTHASE-RELATED"/>
    <property type="match status" value="1"/>
</dbReference>
<dbReference type="Pfam" id="PF00291">
    <property type="entry name" value="PALP"/>
    <property type="match status" value="1"/>
</dbReference>
<dbReference type="PIRSF" id="PIRSF001413">
    <property type="entry name" value="Trp_syn_beta"/>
    <property type="match status" value="1"/>
</dbReference>
<dbReference type="PIRSF" id="PIRSF500824">
    <property type="entry name" value="TrpB_prok"/>
    <property type="match status" value="1"/>
</dbReference>
<dbReference type="SUPFAM" id="SSF53686">
    <property type="entry name" value="Tryptophan synthase beta subunit-like PLP-dependent enzymes"/>
    <property type="match status" value="1"/>
</dbReference>
<dbReference type="PROSITE" id="PS00168">
    <property type="entry name" value="TRP_SYNTHASE_BETA"/>
    <property type="match status" value="1"/>
</dbReference>
<proteinExistence type="evidence at protein level"/>
<name>TRPB2_SACS2</name>
<gene>
    <name type="primary">trpB2</name>
    <name type="ordered locus">SSO1145</name>
</gene>
<protein>
    <recommendedName>
        <fullName>Tryptophan synthase beta chain 2</fullName>
        <ecNumber>4.2.1.20</ecNumber>
    </recommendedName>
</protein>
<reference key="1">
    <citation type="journal article" date="2001" name="Proc. Natl. Acad. Sci. U.S.A.">
        <title>The complete genome of the crenarchaeon Sulfolobus solfataricus P2.</title>
        <authorList>
            <person name="She Q."/>
            <person name="Singh R.K."/>
            <person name="Confalonieri F."/>
            <person name="Zivanovic Y."/>
            <person name="Allard G."/>
            <person name="Awayez M.J."/>
            <person name="Chan-Weiher C.C.-Y."/>
            <person name="Clausen I.G."/>
            <person name="Curtis B.A."/>
            <person name="De Moors A."/>
            <person name="Erauso G."/>
            <person name="Fletcher C."/>
            <person name="Gordon P.M.K."/>
            <person name="Heikamp-de Jong I."/>
            <person name="Jeffries A.C."/>
            <person name="Kozera C.J."/>
            <person name="Medina N."/>
            <person name="Peng X."/>
            <person name="Thi-Ngoc H.P."/>
            <person name="Redder P."/>
            <person name="Schenk M.E."/>
            <person name="Theriault C."/>
            <person name="Tolstrup N."/>
            <person name="Charlebois R.L."/>
            <person name="Doolittle W.F."/>
            <person name="Duguet M."/>
            <person name="Gaasterland T."/>
            <person name="Garrett R.A."/>
            <person name="Ragan M.A."/>
            <person name="Sensen C.W."/>
            <person name="Van der Oost J."/>
        </authorList>
    </citation>
    <scope>NUCLEOTIDE SEQUENCE [LARGE SCALE GENOMIC DNA]</scope>
    <source>
        <strain>ATCC 35092 / DSM 1617 / JCM 11322 / P2</strain>
    </source>
</reference>